<dbReference type="EMBL" id="AF104065">
    <property type="protein sequence ID" value="AAF03249.1"/>
    <property type="molecule type" value="mRNA"/>
</dbReference>
<dbReference type="SMR" id="Q9PVF4"/>
<dbReference type="GO" id="GO:0005576">
    <property type="term" value="C:extracellular region"/>
    <property type="evidence" value="ECO:0007669"/>
    <property type="project" value="UniProtKB-SubCell"/>
</dbReference>
<dbReference type="GO" id="GO:0005509">
    <property type="term" value="F:calcium ion binding"/>
    <property type="evidence" value="ECO:0007669"/>
    <property type="project" value="InterPro"/>
</dbReference>
<dbReference type="GO" id="GO:0008201">
    <property type="term" value="F:heparin binding"/>
    <property type="evidence" value="ECO:0007669"/>
    <property type="project" value="UniProtKB-KW"/>
</dbReference>
<dbReference type="GO" id="GO:0005543">
    <property type="term" value="F:phospholipid binding"/>
    <property type="evidence" value="ECO:0007669"/>
    <property type="project" value="TreeGrafter"/>
</dbReference>
<dbReference type="GO" id="GO:0090729">
    <property type="term" value="F:toxin activity"/>
    <property type="evidence" value="ECO:0007669"/>
    <property type="project" value="UniProtKB-KW"/>
</dbReference>
<dbReference type="GO" id="GO:0050482">
    <property type="term" value="P:arachidonate secretion"/>
    <property type="evidence" value="ECO:0007669"/>
    <property type="project" value="InterPro"/>
</dbReference>
<dbReference type="GO" id="GO:0016042">
    <property type="term" value="P:lipid catabolic process"/>
    <property type="evidence" value="ECO:0007669"/>
    <property type="project" value="UniProtKB-KW"/>
</dbReference>
<dbReference type="GO" id="GO:0042130">
    <property type="term" value="P:negative regulation of T cell proliferation"/>
    <property type="evidence" value="ECO:0007669"/>
    <property type="project" value="TreeGrafter"/>
</dbReference>
<dbReference type="GO" id="GO:0006644">
    <property type="term" value="P:phospholipid metabolic process"/>
    <property type="evidence" value="ECO:0007669"/>
    <property type="project" value="InterPro"/>
</dbReference>
<dbReference type="CDD" id="cd00125">
    <property type="entry name" value="PLA2c"/>
    <property type="match status" value="1"/>
</dbReference>
<dbReference type="FunFam" id="1.20.90.10:FF:000001">
    <property type="entry name" value="Basic phospholipase A2 homolog"/>
    <property type="match status" value="1"/>
</dbReference>
<dbReference type="Gene3D" id="1.20.90.10">
    <property type="entry name" value="Phospholipase A2 domain"/>
    <property type="match status" value="1"/>
</dbReference>
<dbReference type="InterPro" id="IPR001211">
    <property type="entry name" value="PLipase_A2"/>
</dbReference>
<dbReference type="InterPro" id="IPR033112">
    <property type="entry name" value="PLipase_A2_Asp_AS"/>
</dbReference>
<dbReference type="InterPro" id="IPR016090">
    <property type="entry name" value="PLipase_A2_dom"/>
</dbReference>
<dbReference type="InterPro" id="IPR036444">
    <property type="entry name" value="PLipase_A2_dom_sf"/>
</dbReference>
<dbReference type="InterPro" id="IPR033113">
    <property type="entry name" value="PLipase_A2_His_AS"/>
</dbReference>
<dbReference type="PANTHER" id="PTHR11716">
    <property type="entry name" value="PHOSPHOLIPASE A2 FAMILY MEMBER"/>
    <property type="match status" value="1"/>
</dbReference>
<dbReference type="PANTHER" id="PTHR11716:SF9">
    <property type="entry name" value="PHOSPHOLIPASE A2, MEMBRANE ASSOCIATED"/>
    <property type="match status" value="1"/>
</dbReference>
<dbReference type="Pfam" id="PF00068">
    <property type="entry name" value="Phospholip_A2_1"/>
    <property type="match status" value="1"/>
</dbReference>
<dbReference type="PRINTS" id="PR00389">
    <property type="entry name" value="PHPHLIPASEA2"/>
</dbReference>
<dbReference type="SMART" id="SM00085">
    <property type="entry name" value="PA2c"/>
    <property type="match status" value="1"/>
</dbReference>
<dbReference type="SUPFAM" id="SSF48619">
    <property type="entry name" value="Phospholipase A2, PLA2"/>
    <property type="match status" value="1"/>
</dbReference>
<dbReference type="PROSITE" id="PS00119">
    <property type="entry name" value="PA2_ASP"/>
    <property type="match status" value="1"/>
</dbReference>
<dbReference type="PROSITE" id="PS00118">
    <property type="entry name" value="PA2_HIS"/>
    <property type="match status" value="1"/>
</dbReference>
<accession>Q9PVF4</accession>
<reference key="1">
    <citation type="journal article" date="2000" name="Eur. J. Biochem.">
        <title>Phospholipases A2 from Callosellasma rhodostoma venom gland. Cloning and sequencing of 10 of the cDNAs, three-dimensional modelling and chemical modification of the major isozyme.</title>
        <authorList>
            <person name="Tsai I.-H."/>
            <person name="Wang Y.-M."/>
            <person name="Au L.-C."/>
            <person name="Ko T.-P."/>
            <person name="Chen Y.-H."/>
            <person name="Chu Y.-F."/>
        </authorList>
    </citation>
    <scope>NUCLEOTIDE SEQUENCE [MRNA]</scope>
    <scope>FUNCTION</scope>
    <scope>SUBUNIT</scope>
    <scope>MASS SPECTROMETRY</scope>
    <scope>SUBCELLULAR LOCATION</scope>
    <scope>ACTIVITY REGULATION</scope>
    <source>
        <tissue>Venom</tissue>
        <tissue>Venom gland</tissue>
    </source>
</reference>
<protein>
    <recommendedName>
        <fullName evidence="7">Basic phospholipase A2 homolog W6D49</fullName>
        <shortName>svPLA2 homolog</shortName>
    </recommendedName>
    <alternativeName>
        <fullName evidence="5">Inactive basic phospholipase A2 W6D49</fullName>
        <shortName evidence="5">CRV-W6D49</shortName>
        <shortName>svPLA2</shortName>
    </alternativeName>
</protein>
<comment type="function">
    <text evidence="1 4">Snake venom phospholipase A2 homolog that lacks enzymatic activity. Shows myotoxin activities and displays edema-inducing activities (PubMed:11054123). A model of myotoxic mechanism has been proposed: an apo Lys49-PLA2 is activated by the entrance of a hydrophobic molecule (e.g. fatty acid) at the hydrophobic channel of the protein leading to a reorientation of a monomer (By similarity). This reorientation causes a transition between 'inactive' to 'active' states, causing alignment of C-terminal and membrane-docking sites (MDoS) side-by-side and putting the membrane-disruption sites (MDiS) in the same plane, exposed to solvent and in a symmetric position for both monomers (By similarity). The MDoS region stabilizes the toxin on membrane by the interaction of charged residues with phospholipid head groups (By similarity). Subsequently, the MDiS region destabilizes the membrane with penetration of hydrophobic residues (By similarity). This insertion causes a disorganization of the membrane, allowing an uncontrolled influx of ions (i.e. calcium and sodium), and eventually triggering irreversible intracellular alterations and cell death (By similarity).</text>
</comment>
<comment type="activity regulation">
    <text evidence="4">Heparin reduces its edema-inducing activity (PubMed:11054123).</text>
</comment>
<comment type="subunit">
    <text evidence="4">Monomer.</text>
</comment>
<comment type="subcellular location">
    <subcellularLocation>
        <location evidence="4">Secreted</location>
    </subcellularLocation>
</comment>
<comment type="tissue specificity">
    <text evidence="7">Expressed by the venom gland.</text>
</comment>
<comment type="mass spectrometry"/>
<comment type="similarity">
    <text evidence="6">Belongs to the phospholipase A2 family. Group II subfamily. D49 sub-subfamily.</text>
</comment>
<sequence>MRTLWILAVLLVSVDGSMFNLWKMIMVMTGKEATKNYGMYGCNCGPMKRGKPKDATDQCCADHDCCYKKLTDCDPKKESYSYKFEKGEILCGETNPCLNQACECDKAVATCFRDNLDTYNKKQQFNTGIFCSKAKAC</sequence>
<organism>
    <name type="scientific">Calloselasma rhodostoma</name>
    <name type="common">Malayan pit viper</name>
    <name type="synonym">Agkistrodon rhodostoma</name>
    <dbReference type="NCBI Taxonomy" id="8717"/>
    <lineage>
        <taxon>Eukaryota</taxon>
        <taxon>Metazoa</taxon>
        <taxon>Chordata</taxon>
        <taxon>Craniata</taxon>
        <taxon>Vertebrata</taxon>
        <taxon>Euteleostomi</taxon>
        <taxon>Lepidosauria</taxon>
        <taxon>Squamata</taxon>
        <taxon>Bifurcata</taxon>
        <taxon>Unidentata</taxon>
        <taxon>Episquamata</taxon>
        <taxon>Toxicofera</taxon>
        <taxon>Serpentes</taxon>
        <taxon>Colubroidea</taxon>
        <taxon>Viperidae</taxon>
        <taxon>Crotalinae</taxon>
        <taxon>Calloselasma</taxon>
    </lineage>
</organism>
<keyword id="KW-1015">Disulfide bond</keyword>
<keyword id="KW-0358">Heparin-binding</keyword>
<keyword id="KW-0442">Lipid degradation</keyword>
<keyword id="KW-0443">Lipid metabolism</keyword>
<keyword id="KW-0959">Myotoxin</keyword>
<keyword id="KW-0964">Secreted</keyword>
<keyword id="KW-0732">Signal</keyword>
<keyword id="KW-0800">Toxin</keyword>
<evidence type="ECO:0000250" key="1">
    <source>
        <dbReference type="UniProtKB" id="I6L8L6"/>
    </source>
</evidence>
<evidence type="ECO:0000250" key="2">
    <source>
        <dbReference type="UniProtKB" id="P24605"/>
    </source>
</evidence>
<evidence type="ECO:0000250" key="3">
    <source>
        <dbReference type="UniProtKB" id="P81165"/>
    </source>
</evidence>
<evidence type="ECO:0000269" key="4">
    <source>
    </source>
</evidence>
<evidence type="ECO:0000303" key="5">
    <source>
    </source>
</evidence>
<evidence type="ECO:0000305" key="6"/>
<evidence type="ECO:0000305" key="7">
    <source>
    </source>
</evidence>
<feature type="signal peptide" evidence="4">
    <location>
        <begin position="1"/>
        <end position="16"/>
    </location>
</feature>
<feature type="chain" id="PRO_0000022780" description="Basic phospholipase A2 homolog W6D49" evidence="4">
    <location>
        <begin position="17"/>
        <end position="137"/>
    </location>
</feature>
<feature type="region of interest" description="Important for membrane-damaging activities in eukaryotes and bacteria; heparin-binding" evidence="2">
    <location>
        <begin position="121"/>
        <end position="133"/>
    </location>
</feature>
<feature type="site" description="Important residue of the cationic membrane-docking site (MDoS)" evidence="1">
    <location>
        <position position="121"/>
    </location>
</feature>
<feature type="site" description="Hydrophobic membrane-disruption site (MDiS)" evidence="1">
    <location>
        <position position="130"/>
    </location>
</feature>
<feature type="site" description="Cationic membrane-docking site (MDoS)" evidence="1">
    <location>
        <position position="133"/>
    </location>
</feature>
<feature type="disulfide bond" evidence="3">
    <location>
        <begin position="42"/>
        <end position="131"/>
    </location>
</feature>
<feature type="disulfide bond" evidence="3">
    <location>
        <begin position="44"/>
        <end position="60"/>
    </location>
</feature>
<feature type="disulfide bond" evidence="3">
    <location>
        <begin position="59"/>
        <end position="111"/>
    </location>
</feature>
<feature type="disulfide bond" evidence="3">
    <location>
        <begin position="65"/>
        <end position="137"/>
    </location>
</feature>
<feature type="disulfide bond" evidence="3">
    <location>
        <begin position="66"/>
        <end position="104"/>
    </location>
</feature>
<feature type="disulfide bond" evidence="3">
    <location>
        <begin position="73"/>
        <end position="97"/>
    </location>
</feature>
<feature type="disulfide bond" evidence="3">
    <location>
        <begin position="91"/>
        <end position="102"/>
    </location>
</feature>
<proteinExistence type="evidence at protein level"/>
<name>PA2HD_CALRH</name>